<gene>
    <name evidence="1" type="primary">gpmA</name>
    <name type="ordered locus">BceJ2315_07320</name>
    <name type="ORF">BCAL0739</name>
</gene>
<protein>
    <recommendedName>
        <fullName evidence="1">2,3-bisphosphoglycerate-dependent phosphoglycerate mutase</fullName>
        <shortName evidence="1">BPG-dependent PGAM</shortName>
        <shortName evidence="1">PGAM</shortName>
        <shortName evidence="1">Phosphoglyceromutase</shortName>
        <shortName evidence="1">dPGM</shortName>
        <ecNumber evidence="1">5.4.2.11</ecNumber>
    </recommendedName>
</protein>
<proteinExistence type="inferred from homology"/>
<keyword id="KW-0312">Gluconeogenesis</keyword>
<keyword id="KW-0324">Glycolysis</keyword>
<keyword id="KW-0413">Isomerase</keyword>
<evidence type="ECO:0000255" key="1">
    <source>
        <dbReference type="HAMAP-Rule" id="MF_01039"/>
    </source>
</evidence>
<accession>B4EA64</accession>
<reference key="1">
    <citation type="journal article" date="2009" name="J. Bacteriol.">
        <title>The genome of Burkholderia cenocepacia J2315, an epidemic pathogen of cystic fibrosis patients.</title>
        <authorList>
            <person name="Holden M.T."/>
            <person name="Seth-Smith H.M."/>
            <person name="Crossman L.C."/>
            <person name="Sebaihia M."/>
            <person name="Bentley S.D."/>
            <person name="Cerdeno-Tarraga A.M."/>
            <person name="Thomson N.R."/>
            <person name="Bason N."/>
            <person name="Quail M.A."/>
            <person name="Sharp S."/>
            <person name="Cherevach I."/>
            <person name="Churcher C."/>
            <person name="Goodhead I."/>
            <person name="Hauser H."/>
            <person name="Holroyd N."/>
            <person name="Mungall K."/>
            <person name="Scott P."/>
            <person name="Walker D."/>
            <person name="White B."/>
            <person name="Rose H."/>
            <person name="Iversen P."/>
            <person name="Mil-Homens D."/>
            <person name="Rocha E.P."/>
            <person name="Fialho A.M."/>
            <person name="Baldwin A."/>
            <person name="Dowson C."/>
            <person name="Barrell B.G."/>
            <person name="Govan J.R."/>
            <person name="Vandamme P."/>
            <person name="Hart C.A."/>
            <person name="Mahenthiralingam E."/>
            <person name="Parkhill J."/>
        </authorList>
    </citation>
    <scope>NUCLEOTIDE SEQUENCE [LARGE SCALE GENOMIC DNA]</scope>
    <source>
        <strain>ATCC BAA-245 / DSM 16553 / LMG 16656 / NCTC 13227 / J2315 / CF5610</strain>
    </source>
</reference>
<organism>
    <name type="scientific">Burkholderia cenocepacia (strain ATCC BAA-245 / DSM 16553 / LMG 16656 / NCTC 13227 / J2315 / CF5610)</name>
    <name type="common">Burkholderia cepacia (strain J2315)</name>
    <dbReference type="NCBI Taxonomy" id="216591"/>
    <lineage>
        <taxon>Bacteria</taxon>
        <taxon>Pseudomonadati</taxon>
        <taxon>Pseudomonadota</taxon>
        <taxon>Betaproteobacteria</taxon>
        <taxon>Burkholderiales</taxon>
        <taxon>Burkholderiaceae</taxon>
        <taxon>Burkholderia</taxon>
        <taxon>Burkholderia cepacia complex</taxon>
    </lineage>
</organism>
<feature type="chain" id="PRO_1000135929" description="2,3-bisphosphoglycerate-dependent phosphoglycerate mutase">
    <location>
        <begin position="1"/>
        <end position="248"/>
    </location>
</feature>
<feature type="active site" description="Tele-phosphohistidine intermediate" evidence="1">
    <location>
        <position position="9"/>
    </location>
</feature>
<feature type="active site" description="Proton donor/acceptor" evidence="1">
    <location>
        <position position="87"/>
    </location>
</feature>
<feature type="binding site" evidence="1">
    <location>
        <begin position="8"/>
        <end position="15"/>
    </location>
    <ligand>
        <name>substrate</name>
    </ligand>
</feature>
<feature type="binding site" evidence="1">
    <location>
        <begin position="21"/>
        <end position="22"/>
    </location>
    <ligand>
        <name>substrate</name>
    </ligand>
</feature>
<feature type="binding site" evidence="1">
    <location>
        <position position="60"/>
    </location>
    <ligand>
        <name>substrate</name>
    </ligand>
</feature>
<feature type="binding site" evidence="1">
    <location>
        <begin position="87"/>
        <end position="90"/>
    </location>
    <ligand>
        <name>substrate</name>
    </ligand>
</feature>
<feature type="binding site" evidence="1">
    <location>
        <position position="98"/>
    </location>
    <ligand>
        <name>substrate</name>
    </ligand>
</feature>
<feature type="binding site" evidence="1">
    <location>
        <begin position="114"/>
        <end position="115"/>
    </location>
    <ligand>
        <name>substrate</name>
    </ligand>
</feature>
<feature type="binding site" evidence="1">
    <location>
        <begin position="183"/>
        <end position="184"/>
    </location>
    <ligand>
        <name>substrate</name>
    </ligand>
</feature>
<feature type="site" description="Transition state stabilizer" evidence="1">
    <location>
        <position position="182"/>
    </location>
</feature>
<name>GPMA_BURCJ</name>
<dbReference type="EC" id="5.4.2.11" evidence="1"/>
<dbReference type="EMBL" id="AM747720">
    <property type="protein sequence ID" value="CAR51047.1"/>
    <property type="molecule type" value="Genomic_DNA"/>
</dbReference>
<dbReference type="RefSeq" id="WP_006481562.1">
    <property type="nucleotide sequence ID" value="NC_011000.1"/>
</dbReference>
<dbReference type="SMR" id="B4EA64"/>
<dbReference type="GeneID" id="56559444"/>
<dbReference type="KEGG" id="bcj:BCAL0739"/>
<dbReference type="eggNOG" id="COG0588">
    <property type="taxonomic scope" value="Bacteria"/>
</dbReference>
<dbReference type="HOGENOM" id="CLU_033323_1_1_4"/>
<dbReference type="BioCyc" id="BCEN216591:G1G1V-830-MONOMER"/>
<dbReference type="UniPathway" id="UPA00109">
    <property type="reaction ID" value="UER00186"/>
</dbReference>
<dbReference type="Proteomes" id="UP000001035">
    <property type="component" value="Chromosome 1"/>
</dbReference>
<dbReference type="GO" id="GO:0004619">
    <property type="term" value="F:phosphoglycerate mutase activity"/>
    <property type="evidence" value="ECO:0007669"/>
    <property type="project" value="UniProtKB-EC"/>
</dbReference>
<dbReference type="GO" id="GO:0006094">
    <property type="term" value="P:gluconeogenesis"/>
    <property type="evidence" value="ECO:0007669"/>
    <property type="project" value="UniProtKB-UniRule"/>
</dbReference>
<dbReference type="GO" id="GO:0006096">
    <property type="term" value="P:glycolytic process"/>
    <property type="evidence" value="ECO:0007669"/>
    <property type="project" value="UniProtKB-UniRule"/>
</dbReference>
<dbReference type="CDD" id="cd07067">
    <property type="entry name" value="HP_PGM_like"/>
    <property type="match status" value="1"/>
</dbReference>
<dbReference type="FunFam" id="3.40.50.1240:FF:000003">
    <property type="entry name" value="2,3-bisphosphoglycerate-dependent phosphoglycerate mutase"/>
    <property type="match status" value="1"/>
</dbReference>
<dbReference type="Gene3D" id="3.40.50.1240">
    <property type="entry name" value="Phosphoglycerate mutase-like"/>
    <property type="match status" value="1"/>
</dbReference>
<dbReference type="HAMAP" id="MF_01039">
    <property type="entry name" value="PGAM_GpmA"/>
    <property type="match status" value="1"/>
</dbReference>
<dbReference type="InterPro" id="IPR013078">
    <property type="entry name" value="His_Pase_superF_clade-1"/>
</dbReference>
<dbReference type="InterPro" id="IPR029033">
    <property type="entry name" value="His_PPase_superfam"/>
</dbReference>
<dbReference type="InterPro" id="IPR001345">
    <property type="entry name" value="PG/BPGM_mutase_AS"/>
</dbReference>
<dbReference type="InterPro" id="IPR005952">
    <property type="entry name" value="Phosphogly_mut1"/>
</dbReference>
<dbReference type="NCBIfam" id="TIGR01258">
    <property type="entry name" value="pgm_1"/>
    <property type="match status" value="1"/>
</dbReference>
<dbReference type="NCBIfam" id="NF010713">
    <property type="entry name" value="PRK14115.1"/>
    <property type="match status" value="1"/>
</dbReference>
<dbReference type="PANTHER" id="PTHR11931">
    <property type="entry name" value="PHOSPHOGLYCERATE MUTASE"/>
    <property type="match status" value="1"/>
</dbReference>
<dbReference type="Pfam" id="PF00300">
    <property type="entry name" value="His_Phos_1"/>
    <property type="match status" value="1"/>
</dbReference>
<dbReference type="PIRSF" id="PIRSF000709">
    <property type="entry name" value="6PFK_2-Ptase"/>
    <property type="match status" value="1"/>
</dbReference>
<dbReference type="SMART" id="SM00855">
    <property type="entry name" value="PGAM"/>
    <property type="match status" value="1"/>
</dbReference>
<dbReference type="SUPFAM" id="SSF53254">
    <property type="entry name" value="Phosphoglycerate mutase-like"/>
    <property type="match status" value="1"/>
</dbReference>
<dbReference type="PROSITE" id="PS00175">
    <property type="entry name" value="PG_MUTASE"/>
    <property type="match status" value="1"/>
</dbReference>
<comment type="function">
    <text evidence="1">Catalyzes the interconversion of 2-phosphoglycerate and 3-phosphoglycerate.</text>
</comment>
<comment type="catalytic activity">
    <reaction evidence="1">
        <text>(2R)-2-phosphoglycerate = (2R)-3-phosphoglycerate</text>
        <dbReference type="Rhea" id="RHEA:15901"/>
        <dbReference type="ChEBI" id="CHEBI:58272"/>
        <dbReference type="ChEBI" id="CHEBI:58289"/>
        <dbReference type="EC" id="5.4.2.11"/>
    </reaction>
</comment>
<comment type="pathway">
    <text evidence="1">Carbohydrate degradation; glycolysis; pyruvate from D-glyceraldehyde 3-phosphate: step 3/5.</text>
</comment>
<comment type="subunit">
    <text evidence="1">Homodimer.</text>
</comment>
<comment type="similarity">
    <text evidence="1">Belongs to the phosphoglycerate mutase family. BPG-dependent PGAM subfamily.</text>
</comment>
<sequence>MYKLVLIRHGESTWNKENRFTGWVDVDLTEQGRNEAYQAGELLKEAGYTFDIAYTSVLKRAIRTLWHVQDKMDLMYLPVVHSWRLNERHYGALSGLNKAETAAKFGDEQVLVWRRSYDTPPPALEPTDERAPFNDPRYAKVPREQLPLTECLKDTVARVLPLWNESIAPAVRAGKQVLIAAHGNSLRALIKYLDGISDSDIVGLNIPNGVPLVYELDENLKPIKHYYLGDQEAIAQAQAAVAKQGKAG</sequence>